<evidence type="ECO:0000250" key="1"/>
<evidence type="ECO:0000255" key="2">
    <source>
        <dbReference type="HAMAP-Rule" id="MF_01320"/>
    </source>
</evidence>
<evidence type="ECO:0000256" key="3">
    <source>
        <dbReference type="SAM" id="MobiDB-lite"/>
    </source>
</evidence>
<evidence type="ECO:0000305" key="4"/>
<geneLocation type="chloroplast"/>
<name>RK2_OENAR</name>
<keyword id="KW-0150">Chloroplast</keyword>
<keyword id="KW-0934">Plastid</keyword>
<keyword id="KW-0687">Ribonucleoprotein</keyword>
<keyword id="KW-0689">Ribosomal protein</keyword>
<protein>
    <recommendedName>
        <fullName evidence="2">Large ribosomal subunit protein uL2cz/uL2cy</fullName>
    </recommendedName>
    <alternativeName>
        <fullName evidence="4">50S ribosomal protein L2, chloroplastic</fullName>
    </alternativeName>
</protein>
<gene>
    <name type="primary">rpl2-A</name>
</gene>
<gene>
    <name type="primary">rpl2-B</name>
</gene>
<dbReference type="EMBL" id="EU262887">
    <property type="protein sequence ID" value="ABW98745.1"/>
    <property type="molecule type" value="Genomic_DNA"/>
</dbReference>
<dbReference type="EMBL" id="EU262887">
    <property type="protein sequence ID" value="ABW98766.1"/>
    <property type="molecule type" value="Genomic_DNA"/>
</dbReference>
<dbReference type="SMR" id="B0Z4R7"/>
<dbReference type="GO" id="GO:0009507">
    <property type="term" value="C:chloroplast"/>
    <property type="evidence" value="ECO:0007669"/>
    <property type="project" value="UniProtKB-SubCell"/>
</dbReference>
<dbReference type="GO" id="GO:0005762">
    <property type="term" value="C:mitochondrial large ribosomal subunit"/>
    <property type="evidence" value="ECO:0007669"/>
    <property type="project" value="TreeGrafter"/>
</dbReference>
<dbReference type="GO" id="GO:0019843">
    <property type="term" value="F:rRNA binding"/>
    <property type="evidence" value="ECO:0007669"/>
    <property type="project" value="UniProtKB-UniRule"/>
</dbReference>
<dbReference type="GO" id="GO:0003735">
    <property type="term" value="F:structural constituent of ribosome"/>
    <property type="evidence" value="ECO:0007669"/>
    <property type="project" value="InterPro"/>
</dbReference>
<dbReference type="GO" id="GO:0016740">
    <property type="term" value="F:transferase activity"/>
    <property type="evidence" value="ECO:0007669"/>
    <property type="project" value="InterPro"/>
</dbReference>
<dbReference type="GO" id="GO:0032543">
    <property type="term" value="P:mitochondrial translation"/>
    <property type="evidence" value="ECO:0007669"/>
    <property type="project" value="TreeGrafter"/>
</dbReference>
<dbReference type="FunFam" id="4.10.950.10:FF:000001">
    <property type="entry name" value="50S ribosomal protein L2"/>
    <property type="match status" value="1"/>
</dbReference>
<dbReference type="FunFam" id="2.30.30.30:FF:000008">
    <property type="entry name" value="50S ribosomal protein L2, chloroplastic"/>
    <property type="match status" value="1"/>
</dbReference>
<dbReference type="FunFam" id="2.40.50.140:FF:000029">
    <property type="entry name" value="50S ribosomal protein L2, chloroplastic"/>
    <property type="match status" value="1"/>
</dbReference>
<dbReference type="Gene3D" id="2.30.30.30">
    <property type="match status" value="1"/>
</dbReference>
<dbReference type="Gene3D" id="2.40.50.140">
    <property type="entry name" value="Nucleic acid-binding proteins"/>
    <property type="match status" value="1"/>
</dbReference>
<dbReference type="Gene3D" id="4.10.950.10">
    <property type="entry name" value="Ribosomal protein L2, domain 3"/>
    <property type="match status" value="1"/>
</dbReference>
<dbReference type="HAMAP" id="MF_01320_B">
    <property type="entry name" value="Ribosomal_uL2_B"/>
    <property type="match status" value="1"/>
</dbReference>
<dbReference type="InterPro" id="IPR012340">
    <property type="entry name" value="NA-bd_OB-fold"/>
</dbReference>
<dbReference type="InterPro" id="IPR014722">
    <property type="entry name" value="Rib_uL2_dom2"/>
</dbReference>
<dbReference type="InterPro" id="IPR002171">
    <property type="entry name" value="Ribosomal_uL2"/>
</dbReference>
<dbReference type="InterPro" id="IPR005880">
    <property type="entry name" value="Ribosomal_uL2_bac/org-type"/>
</dbReference>
<dbReference type="InterPro" id="IPR022669">
    <property type="entry name" value="Ribosomal_uL2_C"/>
</dbReference>
<dbReference type="InterPro" id="IPR022671">
    <property type="entry name" value="Ribosomal_uL2_CS"/>
</dbReference>
<dbReference type="InterPro" id="IPR014726">
    <property type="entry name" value="Ribosomal_uL2_dom3"/>
</dbReference>
<dbReference type="InterPro" id="IPR022666">
    <property type="entry name" value="Ribosomal_uL2_RNA-bd_dom"/>
</dbReference>
<dbReference type="InterPro" id="IPR008991">
    <property type="entry name" value="Translation_prot_SH3-like_sf"/>
</dbReference>
<dbReference type="NCBIfam" id="TIGR01171">
    <property type="entry name" value="rplB_bact"/>
    <property type="match status" value="1"/>
</dbReference>
<dbReference type="PANTHER" id="PTHR13691:SF5">
    <property type="entry name" value="LARGE RIBOSOMAL SUBUNIT PROTEIN UL2M"/>
    <property type="match status" value="1"/>
</dbReference>
<dbReference type="PANTHER" id="PTHR13691">
    <property type="entry name" value="RIBOSOMAL PROTEIN L2"/>
    <property type="match status" value="1"/>
</dbReference>
<dbReference type="Pfam" id="PF00181">
    <property type="entry name" value="Ribosomal_L2"/>
    <property type="match status" value="1"/>
</dbReference>
<dbReference type="Pfam" id="PF03947">
    <property type="entry name" value="Ribosomal_L2_C"/>
    <property type="match status" value="1"/>
</dbReference>
<dbReference type="PIRSF" id="PIRSF002158">
    <property type="entry name" value="Ribosomal_L2"/>
    <property type="match status" value="1"/>
</dbReference>
<dbReference type="SMART" id="SM01383">
    <property type="entry name" value="Ribosomal_L2"/>
    <property type="match status" value="1"/>
</dbReference>
<dbReference type="SMART" id="SM01382">
    <property type="entry name" value="Ribosomal_L2_C"/>
    <property type="match status" value="1"/>
</dbReference>
<dbReference type="SUPFAM" id="SSF50249">
    <property type="entry name" value="Nucleic acid-binding proteins"/>
    <property type="match status" value="1"/>
</dbReference>
<dbReference type="SUPFAM" id="SSF50104">
    <property type="entry name" value="Translation proteins SH3-like domain"/>
    <property type="match status" value="1"/>
</dbReference>
<dbReference type="PROSITE" id="PS00467">
    <property type="entry name" value="RIBOSOMAL_L2"/>
    <property type="match status" value="1"/>
</dbReference>
<accession>B0Z4R7</accession>
<reference key="1">
    <citation type="journal article" date="2008" name="Nucleic Acids Res.">
        <title>The complete nucleotide sequences of the five genetically distinct plastid genomes of Oenothera, subsection Oenothera: I. Sequence evaluation and plastome evolution.</title>
        <authorList>
            <person name="Greiner S."/>
            <person name="Wang X."/>
            <person name="Rauwolf U."/>
            <person name="Silber M.V."/>
            <person name="Mayer K."/>
            <person name="Meurer J."/>
            <person name="Haberer G."/>
            <person name="Herrmann R.G."/>
        </authorList>
    </citation>
    <scope>NUCLEOTIDE SEQUENCE [LARGE SCALE GENOMIC DNA]</scope>
    <source>
        <strain>cv. Douthat 1</strain>
    </source>
</reference>
<feature type="chain" id="PRO_0000342544" description="Large ribosomal subunit protein uL2cz/uL2cy">
    <location>
        <begin position="1"/>
        <end position="273"/>
    </location>
</feature>
<feature type="region of interest" description="Disordered" evidence="3">
    <location>
        <begin position="1"/>
        <end position="23"/>
    </location>
</feature>
<feature type="region of interest" description="Disordered" evidence="3">
    <location>
        <begin position="223"/>
        <end position="273"/>
    </location>
</feature>
<organism>
    <name type="scientific">Oenothera argillicola</name>
    <name type="common">Appalachian evening primrose</name>
    <dbReference type="NCBI Taxonomy" id="3940"/>
    <lineage>
        <taxon>Eukaryota</taxon>
        <taxon>Viridiplantae</taxon>
        <taxon>Streptophyta</taxon>
        <taxon>Embryophyta</taxon>
        <taxon>Tracheophyta</taxon>
        <taxon>Spermatophyta</taxon>
        <taxon>Magnoliopsida</taxon>
        <taxon>eudicotyledons</taxon>
        <taxon>Gunneridae</taxon>
        <taxon>Pentapetalae</taxon>
        <taxon>rosids</taxon>
        <taxon>malvids</taxon>
        <taxon>Myrtales</taxon>
        <taxon>Onagraceae</taxon>
        <taxon>Onagroideae</taxon>
        <taxon>Onagreae</taxon>
        <taxon>Oenothera</taxon>
    </lineage>
</organism>
<comment type="subunit">
    <text evidence="1">Part of the 50S ribosomal subunit.</text>
</comment>
<comment type="subcellular location">
    <subcellularLocation>
        <location>Plastid</location>
        <location>Chloroplast</location>
    </subcellularLocation>
</comment>
<comment type="similarity">
    <text evidence="4">Belongs to the universal ribosomal protein uL2 family.</text>
</comment>
<sequence length="273" mass="29728">MAIHLYKTSTPSTRNGAVDSQVKSNTRKNLIYGQPRCSKGRNARGIITAGHRGGGHKRLYRKIDFRRNERDIYGRIVSIEYDPNRNASICLIHYGDGEKRYILHPRGAIIGDTIVSGTEVPIKMGNALPLKMPLGTALHNIEITLGKGGQLARAAGAVAKLIAKEGKSATLKLPSGEVRLISNNCSATVGQVGNVGVNQKSLGRAGSKRWLGKRPVVRGVVMNPVDHPHGGGEGRAPIGRKKPATPWGYPALGRRSRKRNKYSENLILRRRSK</sequence>
<proteinExistence type="inferred from homology"/>